<proteinExistence type="inferred from homology"/>
<reference key="1">
    <citation type="journal article" date="1993" name="Mol. Gen. Genet.">
        <title>Cloning and characterization of the gamma-glutamyl phosphate reductase gene of Campylobacter jejuni.</title>
        <authorList>
            <person name="Louie H."/>
            <person name="Chan V.L."/>
        </authorList>
    </citation>
    <scope>NUCLEOTIDE SEQUENCE [GENOMIC DNA]</scope>
    <source>
        <strain>ATCC 43431 / TGH 9011 / Serotype O:3</strain>
    </source>
</reference>
<reference key="2">
    <citation type="journal article" date="2000" name="Nature">
        <title>The genome sequence of the food-borne pathogen Campylobacter jejuni reveals hypervariable sequences.</title>
        <authorList>
            <person name="Parkhill J."/>
            <person name="Wren B.W."/>
            <person name="Mungall K.L."/>
            <person name="Ketley J.M."/>
            <person name="Churcher C.M."/>
            <person name="Basham D."/>
            <person name="Chillingworth T."/>
            <person name="Davies R.M."/>
            <person name="Feltwell T."/>
            <person name="Holroyd S."/>
            <person name="Jagels K."/>
            <person name="Karlyshev A.V."/>
            <person name="Moule S."/>
            <person name="Pallen M.J."/>
            <person name="Penn C.W."/>
            <person name="Quail M.A."/>
            <person name="Rajandream M.A."/>
            <person name="Rutherford K.M."/>
            <person name="van Vliet A.H.M."/>
            <person name="Whitehead S."/>
            <person name="Barrell B.G."/>
        </authorList>
    </citation>
    <scope>NUCLEOTIDE SEQUENCE [LARGE SCALE GENOMIC DNA]</scope>
    <source>
        <strain>ATCC 700819 / NCTC 11168</strain>
    </source>
</reference>
<name>PROA_CAMJE</name>
<organism>
    <name type="scientific">Campylobacter jejuni subsp. jejuni serotype O:2 (strain ATCC 700819 / NCTC 11168)</name>
    <dbReference type="NCBI Taxonomy" id="192222"/>
    <lineage>
        <taxon>Bacteria</taxon>
        <taxon>Pseudomonadati</taxon>
        <taxon>Campylobacterota</taxon>
        <taxon>Epsilonproteobacteria</taxon>
        <taxon>Campylobacterales</taxon>
        <taxon>Campylobacteraceae</taxon>
        <taxon>Campylobacter</taxon>
    </lineage>
</organism>
<gene>
    <name evidence="1" type="primary">proA</name>
    <name type="ordered locus">Cj0558c</name>
</gene>
<keyword id="KW-0028">Amino-acid biosynthesis</keyword>
<keyword id="KW-0963">Cytoplasm</keyword>
<keyword id="KW-0521">NADP</keyword>
<keyword id="KW-0560">Oxidoreductase</keyword>
<keyword id="KW-0641">Proline biosynthesis</keyword>
<keyword id="KW-1185">Reference proteome</keyword>
<sequence length="410" mass="46000">MRNLLENIKKNSQKLLNLTPKDKEKIILKLAQILRENFKIILEANKKDMANFTKSGAMKDRLLLDEKRILALCEGLEKIAYIEDPIGKISKGWKNYAGLSIQKMSIPLGLICVIYEARPSLSAEIAALMIKSSNACVFKGGSEAKFTNEAIFTLVNKVLKEFDLQDCFAMFTQRDEILQILAFDDLIDVIIPRGSSNMIQEIANNTKIPLIKQNKGLCHAFVDQSANLDMALKIILNAKCQRVSVCNALETLLIHEKIAKNFISLLIPEFEKFKVKIHAHENALAYFNNSNLKIFKANENTFDTEWLDFALSVKLVKDCDEAIEHINKHSSLHSETIISNDASNIAKFQRLINSSCIYANASTRFSDGGEFGFGGEVGISTSKLHARGPMGIEDICTYKYIINGEGQIRE</sequence>
<protein>
    <recommendedName>
        <fullName evidence="1">Gamma-glutamyl phosphate reductase</fullName>
        <shortName evidence="1">GPR</shortName>
        <ecNumber evidence="1">1.2.1.41</ecNumber>
    </recommendedName>
    <alternativeName>
        <fullName evidence="1">Glutamate-5-semialdehyde dehydrogenase</fullName>
    </alternativeName>
    <alternativeName>
        <fullName evidence="1">Glutamyl-gamma-semialdehyde dehydrogenase</fullName>
        <shortName evidence="1">GSA dehydrogenase</shortName>
    </alternativeName>
</protein>
<feature type="chain" id="PRO_0000189710" description="Gamma-glutamyl phosphate reductase">
    <location>
        <begin position="1"/>
        <end position="410"/>
    </location>
</feature>
<feature type="sequence conflict" description="In Ref. 1; AAA23030." evidence="2" ref="1">
    <original>A</original>
    <variation>K</variation>
    <location>
        <position position="57"/>
    </location>
</feature>
<feature type="sequence conflict" description="In Ref. 1; AAA23030." evidence="2" ref="1">
    <original>S</original>
    <variation>N</variation>
    <location>
        <position position="100"/>
    </location>
</feature>
<feature type="sequence conflict" description="In Ref. 1; AAA23030." evidence="2" ref="1">
    <original>M</original>
    <variation>I</variation>
    <location>
        <position position="104"/>
    </location>
</feature>
<feature type="sequence conflict" description="In Ref. 1; AAA23030." evidence="2" ref="1">
    <original>A</original>
    <variation>T</variation>
    <location>
        <position position="283"/>
    </location>
</feature>
<feature type="sequence conflict" description="In Ref. 1; AAA23030." evidence="2" ref="1">
    <original>K</original>
    <variation>E</variation>
    <location>
        <position position="293"/>
    </location>
</feature>
<accession>P53000</accession>
<accession>Q0PAV8</accession>
<comment type="function">
    <text evidence="1">Catalyzes the NADPH-dependent reduction of L-glutamate 5-phosphate into L-glutamate 5-semialdehyde and phosphate. The product spontaneously undergoes cyclization to form 1-pyrroline-5-carboxylate.</text>
</comment>
<comment type="catalytic activity">
    <reaction evidence="1">
        <text>L-glutamate 5-semialdehyde + phosphate + NADP(+) = L-glutamyl 5-phosphate + NADPH + H(+)</text>
        <dbReference type="Rhea" id="RHEA:19541"/>
        <dbReference type="ChEBI" id="CHEBI:15378"/>
        <dbReference type="ChEBI" id="CHEBI:43474"/>
        <dbReference type="ChEBI" id="CHEBI:57783"/>
        <dbReference type="ChEBI" id="CHEBI:58066"/>
        <dbReference type="ChEBI" id="CHEBI:58274"/>
        <dbReference type="ChEBI" id="CHEBI:58349"/>
        <dbReference type="EC" id="1.2.1.41"/>
    </reaction>
</comment>
<comment type="pathway">
    <text evidence="1">Amino-acid biosynthesis; L-proline biosynthesis; L-glutamate 5-semialdehyde from L-glutamate: step 2/2.</text>
</comment>
<comment type="subcellular location">
    <subcellularLocation>
        <location evidence="1">Cytoplasm</location>
    </subcellularLocation>
</comment>
<comment type="similarity">
    <text evidence="1">Belongs to the gamma-glutamyl phosphate reductase family.</text>
</comment>
<evidence type="ECO:0000255" key="1">
    <source>
        <dbReference type="HAMAP-Rule" id="MF_00412"/>
    </source>
</evidence>
<evidence type="ECO:0000305" key="2"/>
<dbReference type="EC" id="1.2.1.41" evidence="1"/>
<dbReference type="EMBL" id="M74579">
    <property type="protein sequence ID" value="AAA23030.1"/>
    <property type="molecule type" value="Genomic_DNA"/>
</dbReference>
<dbReference type="EMBL" id="AL111168">
    <property type="protein sequence ID" value="CAL34704.1"/>
    <property type="molecule type" value="Genomic_DNA"/>
</dbReference>
<dbReference type="PIR" id="F81402">
    <property type="entry name" value="F81402"/>
</dbReference>
<dbReference type="PIR" id="S35213">
    <property type="entry name" value="S35213"/>
</dbReference>
<dbReference type="RefSeq" id="WP_002858629.1">
    <property type="nucleotide sequence ID" value="NZ_SZUC01000002.1"/>
</dbReference>
<dbReference type="RefSeq" id="YP_002343989.1">
    <property type="nucleotide sequence ID" value="NC_002163.1"/>
</dbReference>
<dbReference type="SMR" id="P53000"/>
<dbReference type="STRING" id="192222.Cj0558c"/>
<dbReference type="PaxDb" id="192222-Cj0558c"/>
<dbReference type="EnsemblBacteria" id="CAL34704">
    <property type="protein sequence ID" value="CAL34704"/>
    <property type="gene ID" value="Cj0558c"/>
</dbReference>
<dbReference type="GeneID" id="904885"/>
<dbReference type="KEGG" id="cje:Cj0558c"/>
<dbReference type="PATRIC" id="fig|192222.6.peg.550"/>
<dbReference type="eggNOG" id="COG0014">
    <property type="taxonomic scope" value="Bacteria"/>
</dbReference>
<dbReference type="HOGENOM" id="CLU_030231_0_0_7"/>
<dbReference type="OrthoDB" id="9809970at2"/>
<dbReference type="UniPathway" id="UPA00098">
    <property type="reaction ID" value="UER00360"/>
</dbReference>
<dbReference type="Proteomes" id="UP000000799">
    <property type="component" value="Chromosome"/>
</dbReference>
<dbReference type="GO" id="GO:0005737">
    <property type="term" value="C:cytoplasm"/>
    <property type="evidence" value="ECO:0007669"/>
    <property type="project" value="UniProtKB-SubCell"/>
</dbReference>
<dbReference type="GO" id="GO:0004350">
    <property type="term" value="F:glutamate-5-semialdehyde dehydrogenase activity"/>
    <property type="evidence" value="ECO:0007669"/>
    <property type="project" value="UniProtKB-UniRule"/>
</dbReference>
<dbReference type="GO" id="GO:0050661">
    <property type="term" value="F:NADP binding"/>
    <property type="evidence" value="ECO:0007669"/>
    <property type="project" value="InterPro"/>
</dbReference>
<dbReference type="GO" id="GO:0055129">
    <property type="term" value="P:L-proline biosynthetic process"/>
    <property type="evidence" value="ECO:0007669"/>
    <property type="project" value="UniProtKB-UniRule"/>
</dbReference>
<dbReference type="CDD" id="cd07079">
    <property type="entry name" value="ALDH_F18-19_ProA-GPR"/>
    <property type="match status" value="1"/>
</dbReference>
<dbReference type="FunFam" id="3.40.309.10:FF:000006">
    <property type="entry name" value="Gamma-glutamyl phosphate reductase"/>
    <property type="match status" value="1"/>
</dbReference>
<dbReference type="Gene3D" id="3.40.605.10">
    <property type="entry name" value="Aldehyde Dehydrogenase, Chain A, domain 1"/>
    <property type="match status" value="1"/>
</dbReference>
<dbReference type="Gene3D" id="3.40.309.10">
    <property type="entry name" value="Aldehyde Dehydrogenase, Chain A, domain 2"/>
    <property type="match status" value="1"/>
</dbReference>
<dbReference type="HAMAP" id="MF_00412">
    <property type="entry name" value="ProA"/>
    <property type="match status" value="1"/>
</dbReference>
<dbReference type="InterPro" id="IPR016161">
    <property type="entry name" value="Ald_DH/histidinol_DH"/>
</dbReference>
<dbReference type="InterPro" id="IPR016163">
    <property type="entry name" value="Ald_DH_C"/>
</dbReference>
<dbReference type="InterPro" id="IPR016162">
    <property type="entry name" value="Ald_DH_N"/>
</dbReference>
<dbReference type="InterPro" id="IPR015590">
    <property type="entry name" value="Aldehyde_DH_dom"/>
</dbReference>
<dbReference type="InterPro" id="IPR020593">
    <property type="entry name" value="G-glutamylP_reductase_CS"/>
</dbReference>
<dbReference type="InterPro" id="IPR012134">
    <property type="entry name" value="Glu-5-SA_DH"/>
</dbReference>
<dbReference type="InterPro" id="IPR000965">
    <property type="entry name" value="GPR_dom"/>
</dbReference>
<dbReference type="NCBIfam" id="NF001221">
    <property type="entry name" value="PRK00197.1"/>
    <property type="match status" value="1"/>
</dbReference>
<dbReference type="NCBIfam" id="TIGR00407">
    <property type="entry name" value="proA"/>
    <property type="match status" value="1"/>
</dbReference>
<dbReference type="PANTHER" id="PTHR11063:SF8">
    <property type="entry name" value="DELTA-1-PYRROLINE-5-CARBOXYLATE SYNTHASE"/>
    <property type="match status" value="1"/>
</dbReference>
<dbReference type="PANTHER" id="PTHR11063">
    <property type="entry name" value="GLUTAMATE SEMIALDEHYDE DEHYDROGENASE"/>
    <property type="match status" value="1"/>
</dbReference>
<dbReference type="Pfam" id="PF00171">
    <property type="entry name" value="Aldedh"/>
    <property type="match status" value="1"/>
</dbReference>
<dbReference type="PIRSF" id="PIRSF000151">
    <property type="entry name" value="GPR"/>
    <property type="match status" value="1"/>
</dbReference>
<dbReference type="SUPFAM" id="SSF53720">
    <property type="entry name" value="ALDH-like"/>
    <property type="match status" value="1"/>
</dbReference>
<dbReference type="PROSITE" id="PS01223">
    <property type="entry name" value="PROA"/>
    <property type="match status" value="1"/>
</dbReference>